<name>PRMA_DESOH</name>
<feature type="chain" id="PRO_1000192617" description="Ribosomal protein L11 methyltransferase">
    <location>
        <begin position="1"/>
        <end position="302"/>
    </location>
</feature>
<feature type="binding site" evidence="1">
    <location>
        <position position="148"/>
    </location>
    <ligand>
        <name>S-adenosyl-L-methionine</name>
        <dbReference type="ChEBI" id="CHEBI:59789"/>
    </ligand>
</feature>
<feature type="binding site" evidence="1">
    <location>
        <position position="169"/>
    </location>
    <ligand>
        <name>S-adenosyl-L-methionine</name>
        <dbReference type="ChEBI" id="CHEBI:59789"/>
    </ligand>
</feature>
<feature type="binding site" evidence="1">
    <location>
        <position position="191"/>
    </location>
    <ligand>
        <name>S-adenosyl-L-methionine</name>
        <dbReference type="ChEBI" id="CHEBI:59789"/>
    </ligand>
</feature>
<feature type="binding site" evidence="1">
    <location>
        <position position="237"/>
    </location>
    <ligand>
        <name>S-adenosyl-L-methionine</name>
        <dbReference type="ChEBI" id="CHEBI:59789"/>
    </ligand>
</feature>
<accession>A8ZW25</accession>
<proteinExistence type="inferred from homology"/>
<protein>
    <recommendedName>
        <fullName evidence="1">Ribosomal protein L11 methyltransferase</fullName>
        <shortName evidence="1">L11 Mtase</shortName>
        <ecNumber evidence="1">2.1.1.-</ecNumber>
    </recommendedName>
</protein>
<organism>
    <name type="scientific">Desulfosudis oleivorans (strain DSM 6200 / JCM 39069 / Hxd3)</name>
    <name type="common">Desulfococcus oleovorans</name>
    <dbReference type="NCBI Taxonomy" id="96561"/>
    <lineage>
        <taxon>Bacteria</taxon>
        <taxon>Pseudomonadati</taxon>
        <taxon>Thermodesulfobacteriota</taxon>
        <taxon>Desulfobacteria</taxon>
        <taxon>Desulfobacterales</taxon>
        <taxon>Desulfosudaceae</taxon>
        <taxon>Desulfosudis</taxon>
    </lineage>
</organism>
<reference key="1">
    <citation type="submission" date="2007-10" db="EMBL/GenBank/DDBJ databases">
        <title>Complete sequence of Desulfococcus oleovorans Hxd3.</title>
        <authorList>
            <consortium name="US DOE Joint Genome Institute"/>
            <person name="Copeland A."/>
            <person name="Lucas S."/>
            <person name="Lapidus A."/>
            <person name="Barry K."/>
            <person name="Glavina del Rio T."/>
            <person name="Dalin E."/>
            <person name="Tice H."/>
            <person name="Pitluck S."/>
            <person name="Kiss H."/>
            <person name="Brettin T."/>
            <person name="Bruce D."/>
            <person name="Detter J.C."/>
            <person name="Han C."/>
            <person name="Schmutz J."/>
            <person name="Larimer F."/>
            <person name="Land M."/>
            <person name="Hauser L."/>
            <person name="Kyrpides N."/>
            <person name="Kim E."/>
            <person name="Wawrik B."/>
            <person name="Richardson P."/>
        </authorList>
    </citation>
    <scope>NUCLEOTIDE SEQUENCE [LARGE SCALE GENOMIC DNA]</scope>
    <source>
        <strain>DSM 6200 / JCM 39069 / Hxd3</strain>
    </source>
</reference>
<dbReference type="EC" id="2.1.1.-" evidence="1"/>
<dbReference type="EMBL" id="CP000859">
    <property type="protein sequence ID" value="ABW68259.1"/>
    <property type="molecule type" value="Genomic_DNA"/>
</dbReference>
<dbReference type="RefSeq" id="WP_012175871.1">
    <property type="nucleotide sequence ID" value="NC_009943.1"/>
</dbReference>
<dbReference type="SMR" id="A8ZW25"/>
<dbReference type="STRING" id="96561.Dole_2455"/>
<dbReference type="KEGG" id="dol:Dole_2455"/>
<dbReference type="eggNOG" id="COG2264">
    <property type="taxonomic scope" value="Bacteria"/>
</dbReference>
<dbReference type="HOGENOM" id="CLU_049382_0_1_7"/>
<dbReference type="OrthoDB" id="9785995at2"/>
<dbReference type="Proteomes" id="UP000008561">
    <property type="component" value="Chromosome"/>
</dbReference>
<dbReference type="GO" id="GO:0005737">
    <property type="term" value="C:cytoplasm"/>
    <property type="evidence" value="ECO:0007669"/>
    <property type="project" value="UniProtKB-SubCell"/>
</dbReference>
<dbReference type="GO" id="GO:0016279">
    <property type="term" value="F:protein-lysine N-methyltransferase activity"/>
    <property type="evidence" value="ECO:0007669"/>
    <property type="project" value="RHEA"/>
</dbReference>
<dbReference type="GO" id="GO:0032259">
    <property type="term" value="P:methylation"/>
    <property type="evidence" value="ECO:0007669"/>
    <property type="project" value="UniProtKB-KW"/>
</dbReference>
<dbReference type="CDD" id="cd02440">
    <property type="entry name" value="AdoMet_MTases"/>
    <property type="match status" value="1"/>
</dbReference>
<dbReference type="Gene3D" id="3.40.50.150">
    <property type="entry name" value="Vaccinia Virus protein VP39"/>
    <property type="match status" value="1"/>
</dbReference>
<dbReference type="HAMAP" id="MF_00735">
    <property type="entry name" value="Methyltr_PrmA"/>
    <property type="match status" value="1"/>
</dbReference>
<dbReference type="InterPro" id="IPR050078">
    <property type="entry name" value="Ribosomal_L11_MeTrfase_PrmA"/>
</dbReference>
<dbReference type="InterPro" id="IPR004498">
    <property type="entry name" value="Ribosomal_PrmA_MeTrfase"/>
</dbReference>
<dbReference type="InterPro" id="IPR029063">
    <property type="entry name" value="SAM-dependent_MTases_sf"/>
</dbReference>
<dbReference type="NCBIfam" id="TIGR00406">
    <property type="entry name" value="prmA"/>
    <property type="match status" value="1"/>
</dbReference>
<dbReference type="PANTHER" id="PTHR43648">
    <property type="entry name" value="ELECTRON TRANSFER FLAVOPROTEIN BETA SUBUNIT LYSINE METHYLTRANSFERASE"/>
    <property type="match status" value="1"/>
</dbReference>
<dbReference type="PANTHER" id="PTHR43648:SF1">
    <property type="entry name" value="ELECTRON TRANSFER FLAVOPROTEIN BETA SUBUNIT LYSINE METHYLTRANSFERASE"/>
    <property type="match status" value="1"/>
</dbReference>
<dbReference type="Pfam" id="PF06325">
    <property type="entry name" value="PrmA"/>
    <property type="match status" value="1"/>
</dbReference>
<dbReference type="PIRSF" id="PIRSF000401">
    <property type="entry name" value="RPL11_MTase"/>
    <property type="match status" value="1"/>
</dbReference>
<dbReference type="SUPFAM" id="SSF53335">
    <property type="entry name" value="S-adenosyl-L-methionine-dependent methyltransferases"/>
    <property type="match status" value="1"/>
</dbReference>
<evidence type="ECO:0000255" key="1">
    <source>
        <dbReference type="HAMAP-Rule" id="MF_00735"/>
    </source>
</evidence>
<gene>
    <name evidence="1" type="primary">prmA</name>
    <name type="ordered locus">Dole_2455</name>
</gene>
<keyword id="KW-0963">Cytoplasm</keyword>
<keyword id="KW-0489">Methyltransferase</keyword>
<keyword id="KW-1185">Reference proteome</keyword>
<keyword id="KW-0949">S-adenosyl-L-methionine</keyword>
<keyword id="KW-0808">Transferase</keyword>
<comment type="function">
    <text evidence="1">Methylates ribosomal protein L11.</text>
</comment>
<comment type="catalytic activity">
    <reaction evidence="1">
        <text>L-lysyl-[protein] + 3 S-adenosyl-L-methionine = N(6),N(6),N(6)-trimethyl-L-lysyl-[protein] + 3 S-adenosyl-L-homocysteine + 3 H(+)</text>
        <dbReference type="Rhea" id="RHEA:54192"/>
        <dbReference type="Rhea" id="RHEA-COMP:9752"/>
        <dbReference type="Rhea" id="RHEA-COMP:13826"/>
        <dbReference type="ChEBI" id="CHEBI:15378"/>
        <dbReference type="ChEBI" id="CHEBI:29969"/>
        <dbReference type="ChEBI" id="CHEBI:57856"/>
        <dbReference type="ChEBI" id="CHEBI:59789"/>
        <dbReference type="ChEBI" id="CHEBI:61961"/>
    </reaction>
</comment>
<comment type="subcellular location">
    <subcellularLocation>
        <location evidence="1">Cytoplasm</location>
    </subcellularLocation>
</comment>
<comment type="similarity">
    <text evidence="1">Belongs to the methyltransferase superfamily. PrmA family.</text>
</comment>
<sequence length="302" mass="32596">MQWLEAGIVFETEDLFAQTAAELVCNIFYDLGLSGVVTEDPVPVSDHGVRGRVIGYLPVDEALEQTRADLEQMASGLSARHPVRCTLEFTPCDDQDWANAWKDHFFVQKIGRNIVVRPTWRDHVPEPGEVVIDLDPGMAFGTGTHPTTAMCLEMVEKHLAPGTAFLDVGTGSGILMIAAQKLGAKTVWGVDNDGVAVKIAAENLERNGIFAGGNACRIMRADLVTGVDRAFDLVTANILSEVIVALADDVGRVVVPGGLLVCSGIIEPKQAMVEAKLTACGFDIIERKTTDLWVCLVARRTP</sequence>